<reference key="1">
    <citation type="journal article" date="1997" name="J. Bacteriol.">
        <title>The rkpGHI and -J genes are involved in capsular polysaccharide production by Rhizobium meliloti.</title>
        <authorList>
            <person name="Kiss E."/>
            <person name="Reuhs B.L."/>
            <person name="Kim J.S."/>
            <person name="Kereszt A."/>
            <person name="Petrovics G."/>
            <person name="Putnoky P."/>
            <person name="Dusha I."/>
            <person name="Carlson R.W."/>
            <person name="Kondorosi A."/>
        </authorList>
    </citation>
    <scope>NUCLEOTIDE SEQUENCE [GENOMIC DNA]</scope>
    <source>
        <strain>41</strain>
    </source>
</reference>
<reference key="2">
    <citation type="journal article" date="2001" name="Proc. Natl. Acad. Sci. U.S.A.">
        <title>Analysis of the chromosome sequence of the legume symbiont Sinorhizobium meliloti strain 1021.</title>
        <authorList>
            <person name="Capela D."/>
            <person name="Barloy-Hubler F."/>
            <person name="Gouzy J."/>
            <person name="Bothe G."/>
            <person name="Ampe F."/>
            <person name="Batut J."/>
            <person name="Boistard P."/>
            <person name="Becker A."/>
            <person name="Boutry M."/>
            <person name="Cadieu E."/>
            <person name="Dreano S."/>
            <person name="Gloux S."/>
            <person name="Godrie T."/>
            <person name="Goffeau A."/>
            <person name="Kahn D."/>
            <person name="Kiss E."/>
            <person name="Lelaure V."/>
            <person name="Masuy D."/>
            <person name="Pohl T."/>
            <person name="Portetelle D."/>
            <person name="Puehler A."/>
            <person name="Purnelle B."/>
            <person name="Ramsperger U."/>
            <person name="Renard C."/>
            <person name="Thebault P."/>
            <person name="Vandenbol M."/>
            <person name="Weidner S."/>
            <person name="Galibert F."/>
        </authorList>
    </citation>
    <scope>NUCLEOTIDE SEQUENCE [LARGE SCALE GENOMIC DNA]</scope>
    <source>
        <strain>1021</strain>
    </source>
</reference>
<reference key="3">
    <citation type="journal article" date="2001" name="Science">
        <title>The composite genome of the legume symbiont Sinorhizobium meliloti.</title>
        <authorList>
            <person name="Galibert F."/>
            <person name="Finan T.M."/>
            <person name="Long S.R."/>
            <person name="Puehler A."/>
            <person name="Abola P."/>
            <person name="Ampe F."/>
            <person name="Barloy-Hubler F."/>
            <person name="Barnett M.J."/>
            <person name="Becker A."/>
            <person name="Boistard P."/>
            <person name="Bothe G."/>
            <person name="Boutry M."/>
            <person name="Bowser L."/>
            <person name="Buhrmester J."/>
            <person name="Cadieu E."/>
            <person name="Capela D."/>
            <person name="Chain P."/>
            <person name="Cowie A."/>
            <person name="Davis R.W."/>
            <person name="Dreano S."/>
            <person name="Federspiel N.A."/>
            <person name="Fisher R.F."/>
            <person name="Gloux S."/>
            <person name="Godrie T."/>
            <person name="Goffeau A."/>
            <person name="Golding B."/>
            <person name="Gouzy J."/>
            <person name="Gurjal M."/>
            <person name="Hernandez-Lucas I."/>
            <person name="Hong A."/>
            <person name="Huizar L."/>
            <person name="Hyman R.W."/>
            <person name="Jones T."/>
            <person name="Kahn D."/>
            <person name="Kahn M.L."/>
            <person name="Kalman S."/>
            <person name="Keating D.H."/>
            <person name="Kiss E."/>
            <person name="Komp C."/>
            <person name="Lelaure V."/>
            <person name="Masuy D."/>
            <person name="Palm C."/>
            <person name="Peck M.C."/>
            <person name="Pohl T.M."/>
            <person name="Portetelle D."/>
            <person name="Purnelle B."/>
            <person name="Ramsperger U."/>
            <person name="Surzycki R."/>
            <person name="Thebault P."/>
            <person name="Vandenbol M."/>
            <person name="Vorhoelter F.J."/>
            <person name="Weidner S."/>
            <person name="Wells D.H."/>
            <person name="Wong K."/>
            <person name="Yeh K.-C."/>
            <person name="Batut J."/>
        </authorList>
    </citation>
    <scope>NUCLEOTIDE SEQUENCE [LARGE SCALE GENOMIC DNA]</scope>
    <source>
        <strain>1021</strain>
    </source>
</reference>
<keyword id="KW-0972">Capsule biogenesis/degradation</keyword>
<keyword id="KW-1003">Cell membrane</keyword>
<keyword id="KW-0472">Membrane</keyword>
<keyword id="KW-1185">Reference proteome</keyword>
<keyword id="KW-0812">Transmembrane</keyword>
<keyword id="KW-1133">Transmembrane helix</keyword>
<evidence type="ECO:0000255" key="1"/>
<evidence type="ECO:0000305" key="2"/>
<gene>
    <name type="primary">rkpI</name>
    <name type="ordered locus">R00574</name>
    <name type="ORF">SMc02270</name>
</gene>
<comment type="function">
    <text>Involved in antigen K (capsular polysaccharide) biosynthesis.</text>
</comment>
<comment type="pathway">
    <text>Capsule biogenesis; capsule polysaccharide biosynthesis.</text>
</comment>
<comment type="subcellular location">
    <subcellularLocation>
        <location evidence="2">Cell membrane</location>
        <topology evidence="2">Multi-pass membrane protein</topology>
    </subcellularLocation>
</comment>
<sequence length="538" mass="61187">MKWLKGIGLALIPFNLHDYPIALTLGCYLLSCAVIFYTDRFALPARERRKNAPKYGRNRDRIDRLARLPVIALVFAGFFAISWRPLYAAAGTMSFFIIFTGISRAKFKFIREPLVFSDIALVADVFKYKTIFYASSLNIVFWIVAFLYVFGVSALYMYFEPTILPERSRLFWVLVMVGIAAGPWGLLFYGPVNRPTAALVQRLVKAINVKMNTVRFGTFASVVFHFIIWLGVKRDKIVAELSEILRAAVHDLIGHEEAPLIIVWQSESFIDMRHFGVDSIKLPTVDRLRKQAVQWGRLSNVFEGGYTLRTEFAVLSGLVPDDIHVDASYPYLRAAHYADIVWPGKLKRAGWRTHFIHPYDRTFFLRHKAMPLLGFEKLTMLDAFDHKPERDGLYVSDATLAARVLAEVEKLPEEESGFFFVASMANHGPWEPGRVGTLTNPVDIYLAILEQSDAALKQLIDGLNKLDRPVWFVFYGDHAPLLKSFADPFPDPRTDYFIVPLAKARAAAHSPKRAKDEDPWNLLGSMLKHANLHKDALQ</sequence>
<accession>Q52938</accession>
<protein>
    <recommendedName>
        <fullName>Capsular polysaccharide biosynthesis protein RkpI</fullName>
    </recommendedName>
</protein>
<proteinExistence type="predicted"/>
<organism>
    <name type="scientific">Rhizobium meliloti (strain 1021)</name>
    <name type="common">Ensifer meliloti</name>
    <name type="synonym">Sinorhizobium meliloti</name>
    <dbReference type="NCBI Taxonomy" id="266834"/>
    <lineage>
        <taxon>Bacteria</taxon>
        <taxon>Pseudomonadati</taxon>
        <taxon>Pseudomonadota</taxon>
        <taxon>Alphaproteobacteria</taxon>
        <taxon>Hyphomicrobiales</taxon>
        <taxon>Rhizobiaceae</taxon>
        <taxon>Sinorhizobium/Ensifer group</taxon>
        <taxon>Sinorhizobium</taxon>
    </lineage>
</organism>
<feature type="chain" id="PRO_0000097358" description="Capsular polysaccharide biosynthesis protein RkpI">
    <location>
        <begin position="1"/>
        <end position="538"/>
    </location>
</feature>
<feature type="transmembrane region" description="Helical" evidence="1">
    <location>
        <begin position="16"/>
        <end position="36"/>
    </location>
</feature>
<feature type="transmembrane region" description="Helical" evidence="1">
    <location>
        <begin position="70"/>
        <end position="90"/>
    </location>
</feature>
<feature type="transmembrane region" description="Helical" evidence="1">
    <location>
        <begin position="114"/>
        <end position="134"/>
    </location>
</feature>
<feature type="transmembrane region" description="Helical" evidence="1">
    <location>
        <begin position="139"/>
        <end position="159"/>
    </location>
</feature>
<feature type="transmembrane region" description="Helical" evidence="1">
    <location>
        <begin position="170"/>
        <end position="190"/>
    </location>
</feature>
<feature type="transmembrane region" description="Helical" evidence="1">
    <location>
        <begin position="212"/>
        <end position="232"/>
    </location>
</feature>
<feature type="sequence conflict" description="In Ref. 1; CAA45491." evidence="2" ref="1">
    <original>R</original>
    <variation>H</variation>
    <location>
        <position position="64"/>
    </location>
</feature>
<feature type="sequence conflict" description="In Ref. 1; CAA45491." evidence="2" ref="1">
    <location>
        <position position="349"/>
    </location>
</feature>
<feature type="sequence conflict" description="In Ref. 1; CAA45491." evidence="2" ref="1">
    <original>A</original>
    <variation>R</variation>
    <location>
        <position position="514"/>
    </location>
</feature>
<dbReference type="EMBL" id="X64131">
    <property type="protein sequence ID" value="CAA45491.1"/>
    <property type="molecule type" value="Genomic_DNA"/>
</dbReference>
<dbReference type="EMBL" id="AL591688">
    <property type="protein sequence ID" value="CAC45146.1"/>
    <property type="molecule type" value="Genomic_DNA"/>
</dbReference>
<dbReference type="RefSeq" id="NP_384680.1">
    <property type="nucleotide sequence ID" value="NC_003047.1"/>
</dbReference>
<dbReference type="RefSeq" id="WP_010968671.1">
    <property type="nucleotide sequence ID" value="NC_003047.1"/>
</dbReference>
<dbReference type="SMR" id="Q52938"/>
<dbReference type="EnsemblBacteria" id="CAC45146">
    <property type="protein sequence ID" value="CAC45146"/>
    <property type="gene ID" value="SMc02270"/>
</dbReference>
<dbReference type="KEGG" id="sme:SMc02270"/>
<dbReference type="PATRIC" id="fig|266834.11.peg.1950"/>
<dbReference type="eggNOG" id="COG1368">
    <property type="taxonomic scope" value="Bacteria"/>
</dbReference>
<dbReference type="HOGENOM" id="CLU_023230_0_0_5"/>
<dbReference type="OrthoDB" id="5363296at2"/>
<dbReference type="UniPathway" id="UPA00934"/>
<dbReference type="Proteomes" id="UP000001976">
    <property type="component" value="Chromosome"/>
</dbReference>
<dbReference type="GO" id="GO:0005886">
    <property type="term" value="C:plasma membrane"/>
    <property type="evidence" value="ECO:0007669"/>
    <property type="project" value="UniProtKB-SubCell"/>
</dbReference>
<dbReference type="GO" id="GO:0045227">
    <property type="term" value="P:capsule polysaccharide biosynthetic process"/>
    <property type="evidence" value="ECO:0007669"/>
    <property type="project" value="UniProtKB-UniPathway"/>
</dbReference>
<dbReference type="CDD" id="cd16015">
    <property type="entry name" value="LTA_synthase"/>
    <property type="match status" value="1"/>
</dbReference>
<dbReference type="Gene3D" id="3.40.720.10">
    <property type="entry name" value="Alkaline Phosphatase, subunit A"/>
    <property type="match status" value="1"/>
</dbReference>
<dbReference type="InterPro" id="IPR017850">
    <property type="entry name" value="Alkaline_phosphatase_core_sf"/>
</dbReference>
<dbReference type="InterPro" id="IPR050448">
    <property type="entry name" value="OpgB/LTA_synthase_biosynth"/>
</dbReference>
<dbReference type="InterPro" id="IPR000917">
    <property type="entry name" value="Sulfatase_N"/>
</dbReference>
<dbReference type="PANTHER" id="PTHR47371">
    <property type="entry name" value="LIPOTEICHOIC ACID SYNTHASE"/>
    <property type="match status" value="1"/>
</dbReference>
<dbReference type="PANTHER" id="PTHR47371:SF3">
    <property type="entry name" value="PHOSPHOGLYCEROL TRANSFERASE I"/>
    <property type="match status" value="1"/>
</dbReference>
<dbReference type="Pfam" id="PF00884">
    <property type="entry name" value="Sulfatase"/>
    <property type="match status" value="1"/>
</dbReference>
<dbReference type="SUPFAM" id="SSF53649">
    <property type="entry name" value="Alkaline phosphatase-like"/>
    <property type="match status" value="1"/>
</dbReference>
<name>RKPI_RHIME</name>